<organism>
    <name type="scientific">Ureaplasma parvum serovar 3 (strain ATCC 700970)</name>
    <dbReference type="NCBI Taxonomy" id="273119"/>
    <lineage>
        <taxon>Bacteria</taxon>
        <taxon>Bacillati</taxon>
        <taxon>Mycoplasmatota</taxon>
        <taxon>Mycoplasmoidales</taxon>
        <taxon>Mycoplasmoidaceae</taxon>
        <taxon>Ureaplasma</taxon>
    </lineage>
</organism>
<keyword id="KW-0963">Cytoplasm</keyword>
<keyword id="KW-0324">Glycolysis</keyword>
<keyword id="KW-0456">Lyase</keyword>
<keyword id="KW-0460">Magnesium</keyword>
<keyword id="KW-0479">Metal-binding</keyword>
<keyword id="KW-1185">Reference proteome</keyword>
<keyword id="KW-0964">Secreted</keyword>
<feature type="chain" id="PRO_0000134002" description="Enolase">
    <location>
        <begin position="1"/>
        <end position="440"/>
    </location>
</feature>
<feature type="active site" description="Proton donor" evidence="1">
    <location>
        <position position="210"/>
    </location>
</feature>
<feature type="active site" description="Proton acceptor" evidence="1">
    <location>
        <position position="351"/>
    </location>
</feature>
<feature type="binding site" evidence="1">
    <location>
        <position position="168"/>
    </location>
    <ligand>
        <name>(2R)-2-phosphoglycerate</name>
        <dbReference type="ChEBI" id="CHEBI:58289"/>
    </ligand>
</feature>
<feature type="binding site" evidence="1">
    <location>
        <position position="249"/>
    </location>
    <ligand>
        <name>Mg(2+)</name>
        <dbReference type="ChEBI" id="CHEBI:18420"/>
    </ligand>
</feature>
<feature type="binding site" evidence="1">
    <location>
        <position position="300"/>
    </location>
    <ligand>
        <name>Mg(2+)</name>
        <dbReference type="ChEBI" id="CHEBI:18420"/>
    </ligand>
</feature>
<feature type="binding site" evidence="1">
    <location>
        <position position="326"/>
    </location>
    <ligand>
        <name>Mg(2+)</name>
        <dbReference type="ChEBI" id="CHEBI:18420"/>
    </ligand>
</feature>
<feature type="binding site" evidence="1">
    <location>
        <position position="351"/>
    </location>
    <ligand>
        <name>(2R)-2-phosphoglycerate</name>
        <dbReference type="ChEBI" id="CHEBI:58289"/>
    </ligand>
</feature>
<feature type="binding site" evidence="1">
    <location>
        <position position="380"/>
    </location>
    <ligand>
        <name>(2R)-2-phosphoglycerate</name>
        <dbReference type="ChEBI" id="CHEBI:58289"/>
    </ligand>
</feature>
<feature type="binding site" evidence="1">
    <location>
        <position position="381"/>
    </location>
    <ligand>
        <name>(2R)-2-phosphoglycerate</name>
        <dbReference type="ChEBI" id="CHEBI:58289"/>
    </ligand>
</feature>
<feature type="binding site" evidence="1">
    <location>
        <position position="402"/>
    </location>
    <ligand>
        <name>(2R)-2-phosphoglycerate</name>
        <dbReference type="ChEBI" id="CHEBI:58289"/>
    </ligand>
</feature>
<reference key="1">
    <citation type="journal article" date="2000" name="Nature">
        <title>The complete sequence of the mucosal pathogen Ureaplasma urealyticum.</title>
        <authorList>
            <person name="Glass J.I."/>
            <person name="Lefkowitz E.J."/>
            <person name="Glass J.S."/>
            <person name="Heiner C.R."/>
            <person name="Chen E.Y."/>
            <person name="Cassell G.H."/>
        </authorList>
    </citation>
    <scope>NUCLEOTIDE SEQUENCE [LARGE SCALE GENOMIC DNA]</scope>
    <source>
        <strain>ATCC 700970</strain>
    </source>
</reference>
<name>ENO_UREPA</name>
<gene>
    <name evidence="1" type="primary">eno</name>
    <name type="ordered locus">UU184</name>
</gene>
<dbReference type="EC" id="4.2.1.11" evidence="1"/>
<dbReference type="EMBL" id="AF222894">
    <property type="protein sequence ID" value="AAF30591.1"/>
    <property type="molecule type" value="Genomic_DNA"/>
</dbReference>
<dbReference type="RefSeq" id="WP_006688966.1">
    <property type="nucleotide sequence ID" value="NC_002162.1"/>
</dbReference>
<dbReference type="SMR" id="Q9PQV9"/>
<dbReference type="STRING" id="273119.UU184"/>
<dbReference type="EnsemblBacteria" id="AAF30591">
    <property type="protein sequence ID" value="AAF30591"/>
    <property type="gene ID" value="UU184"/>
</dbReference>
<dbReference type="GeneID" id="29672638"/>
<dbReference type="KEGG" id="uur:UU184"/>
<dbReference type="eggNOG" id="COG0148">
    <property type="taxonomic scope" value="Bacteria"/>
</dbReference>
<dbReference type="HOGENOM" id="CLU_031223_2_1_14"/>
<dbReference type="OrthoDB" id="9804716at2"/>
<dbReference type="UniPathway" id="UPA00109">
    <property type="reaction ID" value="UER00187"/>
</dbReference>
<dbReference type="Proteomes" id="UP000000423">
    <property type="component" value="Chromosome"/>
</dbReference>
<dbReference type="GO" id="GO:0009986">
    <property type="term" value="C:cell surface"/>
    <property type="evidence" value="ECO:0007669"/>
    <property type="project" value="UniProtKB-SubCell"/>
</dbReference>
<dbReference type="GO" id="GO:0005576">
    <property type="term" value="C:extracellular region"/>
    <property type="evidence" value="ECO:0007669"/>
    <property type="project" value="UniProtKB-SubCell"/>
</dbReference>
<dbReference type="GO" id="GO:0000015">
    <property type="term" value="C:phosphopyruvate hydratase complex"/>
    <property type="evidence" value="ECO:0007669"/>
    <property type="project" value="InterPro"/>
</dbReference>
<dbReference type="GO" id="GO:0000287">
    <property type="term" value="F:magnesium ion binding"/>
    <property type="evidence" value="ECO:0007669"/>
    <property type="project" value="UniProtKB-UniRule"/>
</dbReference>
<dbReference type="GO" id="GO:0004634">
    <property type="term" value="F:phosphopyruvate hydratase activity"/>
    <property type="evidence" value="ECO:0007669"/>
    <property type="project" value="UniProtKB-UniRule"/>
</dbReference>
<dbReference type="GO" id="GO:0006096">
    <property type="term" value="P:glycolytic process"/>
    <property type="evidence" value="ECO:0007669"/>
    <property type="project" value="UniProtKB-UniRule"/>
</dbReference>
<dbReference type="CDD" id="cd03313">
    <property type="entry name" value="enolase"/>
    <property type="match status" value="1"/>
</dbReference>
<dbReference type="Gene3D" id="3.20.20.120">
    <property type="entry name" value="Enolase-like C-terminal domain"/>
    <property type="match status" value="1"/>
</dbReference>
<dbReference type="Gene3D" id="3.30.390.10">
    <property type="entry name" value="Enolase-like, N-terminal domain"/>
    <property type="match status" value="1"/>
</dbReference>
<dbReference type="HAMAP" id="MF_00318">
    <property type="entry name" value="Enolase"/>
    <property type="match status" value="1"/>
</dbReference>
<dbReference type="InterPro" id="IPR000941">
    <property type="entry name" value="Enolase"/>
</dbReference>
<dbReference type="InterPro" id="IPR036849">
    <property type="entry name" value="Enolase-like_C_sf"/>
</dbReference>
<dbReference type="InterPro" id="IPR029017">
    <property type="entry name" value="Enolase-like_N"/>
</dbReference>
<dbReference type="InterPro" id="IPR020810">
    <property type="entry name" value="Enolase_C"/>
</dbReference>
<dbReference type="InterPro" id="IPR020809">
    <property type="entry name" value="Enolase_CS"/>
</dbReference>
<dbReference type="InterPro" id="IPR020811">
    <property type="entry name" value="Enolase_N"/>
</dbReference>
<dbReference type="NCBIfam" id="TIGR01060">
    <property type="entry name" value="eno"/>
    <property type="match status" value="1"/>
</dbReference>
<dbReference type="PANTHER" id="PTHR11902">
    <property type="entry name" value="ENOLASE"/>
    <property type="match status" value="1"/>
</dbReference>
<dbReference type="PANTHER" id="PTHR11902:SF1">
    <property type="entry name" value="ENOLASE"/>
    <property type="match status" value="1"/>
</dbReference>
<dbReference type="Pfam" id="PF00113">
    <property type="entry name" value="Enolase_C"/>
    <property type="match status" value="1"/>
</dbReference>
<dbReference type="Pfam" id="PF03952">
    <property type="entry name" value="Enolase_N"/>
    <property type="match status" value="1"/>
</dbReference>
<dbReference type="PIRSF" id="PIRSF001400">
    <property type="entry name" value="Enolase"/>
    <property type="match status" value="1"/>
</dbReference>
<dbReference type="PRINTS" id="PR00148">
    <property type="entry name" value="ENOLASE"/>
</dbReference>
<dbReference type="SFLD" id="SFLDF00002">
    <property type="entry name" value="enolase"/>
    <property type="match status" value="1"/>
</dbReference>
<dbReference type="SFLD" id="SFLDG00178">
    <property type="entry name" value="enolase"/>
    <property type="match status" value="1"/>
</dbReference>
<dbReference type="SMART" id="SM01192">
    <property type="entry name" value="Enolase_C"/>
    <property type="match status" value="1"/>
</dbReference>
<dbReference type="SMART" id="SM01193">
    <property type="entry name" value="Enolase_N"/>
    <property type="match status" value="1"/>
</dbReference>
<dbReference type="SUPFAM" id="SSF51604">
    <property type="entry name" value="Enolase C-terminal domain-like"/>
    <property type="match status" value="1"/>
</dbReference>
<dbReference type="SUPFAM" id="SSF54826">
    <property type="entry name" value="Enolase N-terminal domain-like"/>
    <property type="match status" value="1"/>
</dbReference>
<dbReference type="PROSITE" id="PS00164">
    <property type="entry name" value="ENOLASE"/>
    <property type="match status" value="1"/>
</dbReference>
<accession>Q9PQV9</accession>
<comment type="function">
    <text evidence="1">Catalyzes the reversible conversion of 2-phosphoglycerate (2-PG) into phosphoenolpyruvate (PEP). It is essential for the degradation of carbohydrates via glycolysis.</text>
</comment>
<comment type="catalytic activity">
    <reaction evidence="1">
        <text>(2R)-2-phosphoglycerate = phosphoenolpyruvate + H2O</text>
        <dbReference type="Rhea" id="RHEA:10164"/>
        <dbReference type="ChEBI" id="CHEBI:15377"/>
        <dbReference type="ChEBI" id="CHEBI:58289"/>
        <dbReference type="ChEBI" id="CHEBI:58702"/>
        <dbReference type="EC" id="4.2.1.11"/>
    </reaction>
</comment>
<comment type="cofactor">
    <cofactor evidence="1">
        <name>Mg(2+)</name>
        <dbReference type="ChEBI" id="CHEBI:18420"/>
    </cofactor>
    <text evidence="1">Binds a second Mg(2+) ion via substrate during catalysis.</text>
</comment>
<comment type="pathway">
    <text evidence="1">Carbohydrate degradation; glycolysis; pyruvate from D-glyceraldehyde 3-phosphate: step 4/5.</text>
</comment>
<comment type="subcellular location">
    <subcellularLocation>
        <location evidence="1">Cytoplasm</location>
    </subcellularLocation>
    <subcellularLocation>
        <location evidence="1">Secreted</location>
    </subcellularLocation>
    <subcellularLocation>
        <location evidence="1">Cell surface</location>
    </subcellularLocation>
    <text evidence="1">Fractions of enolase are present in both the cytoplasm and on the cell surface.</text>
</comment>
<comment type="similarity">
    <text evidence="1">Belongs to the enolase family.</text>
</comment>
<proteinExistence type="inferred from homology"/>
<sequence length="440" mass="49301">MKIINLLAYQILDSRGQPTVAVKLFLENDQSVIAMVPSGASTGAKEALELRDGDVNYFFNKSVKLAIQNINNIIRPHLINKNVLNFFELDNLLINLDGTENKSKLGANALLGVSIAIVKAGAIAASKPLYQYIKEDLMHNYDVNYYAPIPLMNFINGGAHADNDLDIQEFMIVPLNAISFSQAIQIGSEIFHQLDKLLKSNHLSTTKGDEGGFAPMLKNNYVTLELLVHAIKKAHYLPSKTQGVCLALDVAASELYENGKYFFKKSSSHNITLEQTSFSSDEWIKYWSKLVSMFPIISIEDCFEENDWNSFALFLKNNPHIQVVGDDLYCTNLKYLQKGIDFKATNAILIKPNQIGTISETLDVIKFAQKNNINTIISHRSGETEDTFIADLAIGVGAGQIKTGSLSRSERIAKYNRILEIEQELKDKLIYEPSKFFKFR</sequence>
<protein>
    <recommendedName>
        <fullName evidence="1">Enolase</fullName>
        <ecNumber evidence="1">4.2.1.11</ecNumber>
    </recommendedName>
    <alternativeName>
        <fullName evidence="1">2-phospho-D-glycerate hydro-lyase</fullName>
    </alternativeName>
    <alternativeName>
        <fullName evidence="1">2-phosphoglycerate dehydratase</fullName>
    </alternativeName>
</protein>
<evidence type="ECO:0000255" key="1">
    <source>
        <dbReference type="HAMAP-Rule" id="MF_00318"/>
    </source>
</evidence>